<proteinExistence type="inferred from homology"/>
<keyword id="KW-0378">Hydrolase</keyword>
<keyword id="KW-0460">Magnesium</keyword>
<keyword id="KW-0479">Metal-binding</keyword>
<keyword id="KW-0546">Nucleotide metabolism</keyword>
<protein>
    <recommendedName>
        <fullName evidence="1">Deoxyuridine 5'-triphosphate nucleotidohydrolase</fullName>
        <shortName evidence="1">dUTPase</shortName>
        <ecNumber evidence="1">3.6.1.23</ecNumber>
    </recommendedName>
    <alternativeName>
        <fullName evidence="1">dUTP pyrophosphatase</fullName>
    </alternativeName>
</protein>
<evidence type="ECO:0000255" key="1">
    <source>
        <dbReference type="HAMAP-Rule" id="MF_00116"/>
    </source>
</evidence>
<gene>
    <name evidence="1" type="primary">dut</name>
    <name type="ordered locus">HY04AAS1_0144</name>
</gene>
<dbReference type="EC" id="3.6.1.23" evidence="1"/>
<dbReference type="EMBL" id="CP001130">
    <property type="protein sequence ID" value="ACG56836.1"/>
    <property type="molecule type" value="Genomic_DNA"/>
</dbReference>
<dbReference type="RefSeq" id="WP_012513193.1">
    <property type="nucleotide sequence ID" value="NC_011126.1"/>
</dbReference>
<dbReference type="SMR" id="B4U6R8"/>
<dbReference type="STRING" id="380749.HY04AAS1_0144"/>
<dbReference type="KEGG" id="hya:HY04AAS1_0144"/>
<dbReference type="eggNOG" id="COG0756">
    <property type="taxonomic scope" value="Bacteria"/>
</dbReference>
<dbReference type="HOGENOM" id="CLU_068508_1_2_0"/>
<dbReference type="OrthoDB" id="9809956at2"/>
<dbReference type="UniPathway" id="UPA00610">
    <property type="reaction ID" value="UER00666"/>
</dbReference>
<dbReference type="GO" id="GO:0004170">
    <property type="term" value="F:dUTP diphosphatase activity"/>
    <property type="evidence" value="ECO:0007669"/>
    <property type="project" value="UniProtKB-UniRule"/>
</dbReference>
<dbReference type="GO" id="GO:0000287">
    <property type="term" value="F:magnesium ion binding"/>
    <property type="evidence" value="ECO:0007669"/>
    <property type="project" value="UniProtKB-UniRule"/>
</dbReference>
<dbReference type="GO" id="GO:0006226">
    <property type="term" value="P:dUMP biosynthetic process"/>
    <property type="evidence" value="ECO:0007669"/>
    <property type="project" value="UniProtKB-UniRule"/>
</dbReference>
<dbReference type="GO" id="GO:0046081">
    <property type="term" value="P:dUTP catabolic process"/>
    <property type="evidence" value="ECO:0007669"/>
    <property type="project" value="InterPro"/>
</dbReference>
<dbReference type="CDD" id="cd07557">
    <property type="entry name" value="trimeric_dUTPase"/>
    <property type="match status" value="1"/>
</dbReference>
<dbReference type="FunFam" id="2.70.40.10:FF:000008">
    <property type="entry name" value="Deoxyuridine 5'-triphosphate nucleotidohydrolase"/>
    <property type="match status" value="1"/>
</dbReference>
<dbReference type="Gene3D" id="2.70.40.10">
    <property type="match status" value="1"/>
</dbReference>
<dbReference type="HAMAP" id="MF_00116">
    <property type="entry name" value="dUTPase_bact"/>
    <property type="match status" value="1"/>
</dbReference>
<dbReference type="InterPro" id="IPR008181">
    <property type="entry name" value="dUTPase"/>
</dbReference>
<dbReference type="InterPro" id="IPR029054">
    <property type="entry name" value="dUTPase-like"/>
</dbReference>
<dbReference type="InterPro" id="IPR036157">
    <property type="entry name" value="dUTPase-like_sf"/>
</dbReference>
<dbReference type="InterPro" id="IPR033704">
    <property type="entry name" value="dUTPase_trimeric"/>
</dbReference>
<dbReference type="NCBIfam" id="TIGR00576">
    <property type="entry name" value="dut"/>
    <property type="match status" value="1"/>
</dbReference>
<dbReference type="NCBIfam" id="NF001862">
    <property type="entry name" value="PRK00601.1"/>
    <property type="match status" value="1"/>
</dbReference>
<dbReference type="PANTHER" id="PTHR11241">
    <property type="entry name" value="DEOXYURIDINE 5'-TRIPHOSPHATE NUCLEOTIDOHYDROLASE"/>
    <property type="match status" value="1"/>
</dbReference>
<dbReference type="PANTHER" id="PTHR11241:SF0">
    <property type="entry name" value="DEOXYURIDINE 5'-TRIPHOSPHATE NUCLEOTIDOHYDROLASE"/>
    <property type="match status" value="1"/>
</dbReference>
<dbReference type="Pfam" id="PF00692">
    <property type="entry name" value="dUTPase"/>
    <property type="match status" value="1"/>
</dbReference>
<dbReference type="SUPFAM" id="SSF51283">
    <property type="entry name" value="dUTPase-like"/>
    <property type="match status" value="1"/>
</dbReference>
<name>DUT_HYDS0</name>
<accession>B4U6R8</accession>
<reference key="1">
    <citation type="journal article" date="2009" name="J. Bacteriol.">
        <title>Complete and draft genome sequences of six members of the Aquificales.</title>
        <authorList>
            <person name="Reysenbach A.-L."/>
            <person name="Hamamura N."/>
            <person name="Podar M."/>
            <person name="Griffiths E."/>
            <person name="Ferreira S."/>
            <person name="Hochstein R."/>
            <person name="Heidelberg J."/>
            <person name="Johnson J."/>
            <person name="Mead D."/>
            <person name="Pohorille A."/>
            <person name="Sarmiento M."/>
            <person name="Schweighofer K."/>
            <person name="Seshadri R."/>
            <person name="Voytek M.A."/>
        </authorList>
    </citation>
    <scope>NUCLEOTIDE SEQUENCE [LARGE SCALE GENOMIC DNA]</scope>
    <source>
        <strain>Y04AAS1</strain>
    </source>
</reference>
<feature type="chain" id="PRO_1000094969" description="Deoxyuridine 5'-triphosphate nucleotidohydrolase">
    <location>
        <begin position="1"/>
        <end position="144"/>
    </location>
</feature>
<feature type="binding site" evidence="1">
    <location>
        <begin position="63"/>
        <end position="65"/>
    </location>
    <ligand>
        <name>substrate</name>
    </ligand>
</feature>
<feature type="binding site" evidence="1">
    <location>
        <position position="76"/>
    </location>
    <ligand>
        <name>substrate</name>
    </ligand>
</feature>
<feature type="binding site" evidence="1">
    <location>
        <begin position="80"/>
        <end position="82"/>
    </location>
    <ligand>
        <name>substrate</name>
    </ligand>
</feature>
<feature type="binding site" evidence="1">
    <location>
        <position position="90"/>
    </location>
    <ligand>
        <name>substrate</name>
    </ligand>
</feature>
<comment type="function">
    <text evidence="1">This enzyme is involved in nucleotide metabolism: it produces dUMP, the immediate precursor of thymidine nucleotides and it decreases the intracellular concentration of dUTP so that uracil cannot be incorporated into DNA.</text>
</comment>
<comment type="catalytic activity">
    <reaction evidence="1">
        <text>dUTP + H2O = dUMP + diphosphate + H(+)</text>
        <dbReference type="Rhea" id="RHEA:10248"/>
        <dbReference type="ChEBI" id="CHEBI:15377"/>
        <dbReference type="ChEBI" id="CHEBI:15378"/>
        <dbReference type="ChEBI" id="CHEBI:33019"/>
        <dbReference type="ChEBI" id="CHEBI:61555"/>
        <dbReference type="ChEBI" id="CHEBI:246422"/>
        <dbReference type="EC" id="3.6.1.23"/>
    </reaction>
</comment>
<comment type="cofactor">
    <cofactor evidence="1">
        <name>Mg(2+)</name>
        <dbReference type="ChEBI" id="CHEBI:18420"/>
    </cofactor>
</comment>
<comment type="pathway">
    <text evidence="1">Pyrimidine metabolism; dUMP biosynthesis; dUMP from dCTP (dUTP route): step 2/2.</text>
</comment>
<comment type="similarity">
    <text evidence="1">Belongs to the dUTPase family.</text>
</comment>
<organism>
    <name type="scientific">Hydrogenobaculum sp. (strain Y04AAS1)</name>
    <dbReference type="NCBI Taxonomy" id="380749"/>
    <lineage>
        <taxon>Bacteria</taxon>
        <taxon>Pseudomonadati</taxon>
        <taxon>Aquificota</taxon>
        <taxon>Aquificia</taxon>
        <taxon>Aquificales</taxon>
        <taxon>Aquificaceae</taxon>
        <taxon>Hydrogenobaculum</taxon>
    </lineage>
</organism>
<sequence>MKLLVKKLREDAALPFYATSGASGLDLFCVDDVVVIRPFERVLVSTGIAIELPEGYEAQIRPRSGLALKKGVTVLNSPGTIDHDYRGEIKVILINLSDKEVIIEKGERIAQMVIVPVLKVEVVEAKELSNTQRQDGGFGSTGMK</sequence>